<dbReference type="EC" id="4.2.1.96"/>
<dbReference type="EMBL" id="BA000045">
    <property type="protein sequence ID" value="BAC88867.1"/>
    <property type="molecule type" value="Genomic_DNA"/>
</dbReference>
<dbReference type="RefSeq" id="NP_923872.1">
    <property type="nucleotide sequence ID" value="NC_005125.1"/>
</dbReference>
<dbReference type="RefSeq" id="WP_011140928.1">
    <property type="nucleotide sequence ID" value="NC_005125.1"/>
</dbReference>
<dbReference type="SMR" id="Q7NM43"/>
<dbReference type="FunCoup" id="Q7NM43">
    <property type="interactions" value="65"/>
</dbReference>
<dbReference type="STRING" id="251221.gene:10758404"/>
<dbReference type="EnsemblBacteria" id="BAC88867">
    <property type="protein sequence ID" value="BAC88867"/>
    <property type="gene ID" value="BAC88867"/>
</dbReference>
<dbReference type="KEGG" id="gvi:gll0926"/>
<dbReference type="PATRIC" id="fig|251221.4.peg.945"/>
<dbReference type="eggNOG" id="COG2154">
    <property type="taxonomic scope" value="Bacteria"/>
</dbReference>
<dbReference type="HOGENOM" id="CLU_081974_2_2_3"/>
<dbReference type="InParanoid" id="Q7NM43"/>
<dbReference type="OrthoDB" id="9794987at2"/>
<dbReference type="PhylomeDB" id="Q7NM43"/>
<dbReference type="Proteomes" id="UP000000557">
    <property type="component" value="Chromosome"/>
</dbReference>
<dbReference type="GO" id="GO:0008124">
    <property type="term" value="F:4-alpha-hydroxytetrahydrobiopterin dehydratase activity"/>
    <property type="evidence" value="ECO:0007669"/>
    <property type="project" value="UniProtKB-UniRule"/>
</dbReference>
<dbReference type="GO" id="GO:0006729">
    <property type="term" value="P:tetrahydrobiopterin biosynthetic process"/>
    <property type="evidence" value="ECO:0007669"/>
    <property type="project" value="InterPro"/>
</dbReference>
<dbReference type="CDD" id="cd00913">
    <property type="entry name" value="PCD_DCoH_subfamily_a"/>
    <property type="match status" value="1"/>
</dbReference>
<dbReference type="Gene3D" id="3.30.1360.20">
    <property type="entry name" value="Transcriptional coactivator/pterin dehydratase"/>
    <property type="match status" value="1"/>
</dbReference>
<dbReference type="HAMAP" id="MF_00434">
    <property type="entry name" value="Pterin_4_alpha"/>
    <property type="match status" value="1"/>
</dbReference>
<dbReference type="InterPro" id="IPR036428">
    <property type="entry name" value="PCD_sf"/>
</dbReference>
<dbReference type="InterPro" id="IPR050376">
    <property type="entry name" value="Pterin-4-alpha-carb_dehyd"/>
</dbReference>
<dbReference type="InterPro" id="IPR001533">
    <property type="entry name" value="Pterin_deHydtase"/>
</dbReference>
<dbReference type="NCBIfam" id="NF002016">
    <property type="entry name" value="PRK00823.1-1"/>
    <property type="match status" value="1"/>
</dbReference>
<dbReference type="PANTHER" id="PTHR42805">
    <property type="entry name" value="PTERIN-4-ALPHA-CARBINOLAMINE DEHYDRATASE-RELATED"/>
    <property type="match status" value="1"/>
</dbReference>
<dbReference type="PANTHER" id="PTHR42805:SF1">
    <property type="entry name" value="PTERIN-4-ALPHA-CARBINOLAMINE DEHYDRATASE-RELATED"/>
    <property type="match status" value="1"/>
</dbReference>
<dbReference type="Pfam" id="PF01329">
    <property type="entry name" value="Pterin_4a"/>
    <property type="match status" value="1"/>
</dbReference>
<dbReference type="SUPFAM" id="SSF55248">
    <property type="entry name" value="PCD-like"/>
    <property type="match status" value="1"/>
</dbReference>
<sequence length="116" mass="12922">MNLTEQRCTACRPDAPRVGAAEIAELHPQIPAWRIVEIEGTPRLERQFRLRDFREAIAFTVRVGEEAEAEGHHPALLTEWGSVKVSWWTHAIAGLHRNDFVMAAKTDAIAAQVGAV</sequence>
<proteinExistence type="inferred from homology"/>
<reference key="1">
    <citation type="journal article" date="2003" name="DNA Res.">
        <title>Complete genome structure of Gloeobacter violaceus PCC 7421, a cyanobacterium that lacks thylakoids.</title>
        <authorList>
            <person name="Nakamura Y."/>
            <person name="Kaneko T."/>
            <person name="Sato S."/>
            <person name="Mimuro M."/>
            <person name="Miyashita H."/>
            <person name="Tsuchiya T."/>
            <person name="Sasamoto S."/>
            <person name="Watanabe A."/>
            <person name="Kawashima K."/>
            <person name="Kishida Y."/>
            <person name="Kiyokawa C."/>
            <person name="Kohara M."/>
            <person name="Matsumoto M."/>
            <person name="Matsuno A."/>
            <person name="Nakazaki N."/>
            <person name="Shimpo S."/>
            <person name="Takeuchi C."/>
            <person name="Yamada M."/>
            <person name="Tabata S."/>
        </authorList>
    </citation>
    <scope>NUCLEOTIDE SEQUENCE [LARGE SCALE GENOMIC DNA]</scope>
    <source>
        <strain>ATCC 29082 / PCC 7421</strain>
    </source>
</reference>
<protein>
    <recommendedName>
        <fullName>Putative pterin-4-alpha-carbinolamine dehydratase 1</fullName>
        <shortName>PHS 1</shortName>
        <ecNumber>4.2.1.96</ecNumber>
    </recommendedName>
    <alternativeName>
        <fullName>4-alpha-hydroxy-tetrahydropterin dehydratase 1</fullName>
    </alternativeName>
    <alternativeName>
        <fullName>Pterin carbinolamine dehydratase 1</fullName>
        <shortName>PCD 1</shortName>
    </alternativeName>
</protein>
<gene>
    <name type="ordered locus">gll0926</name>
</gene>
<comment type="catalytic activity">
    <reaction>
        <text>(4aS,6R)-4a-hydroxy-L-erythro-5,6,7,8-tetrahydrobiopterin = (6R)-L-erythro-6,7-dihydrobiopterin + H2O</text>
        <dbReference type="Rhea" id="RHEA:11920"/>
        <dbReference type="ChEBI" id="CHEBI:15377"/>
        <dbReference type="ChEBI" id="CHEBI:15642"/>
        <dbReference type="ChEBI" id="CHEBI:43120"/>
        <dbReference type="EC" id="4.2.1.96"/>
    </reaction>
</comment>
<comment type="similarity">
    <text evidence="1">Belongs to the pterin-4-alpha-carbinolamine dehydratase family.</text>
</comment>
<feature type="chain" id="PRO_0000063081" description="Putative pterin-4-alpha-carbinolamine dehydratase 1">
    <location>
        <begin position="1"/>
        <end position="116"/>
    </location>
</feature>
<evidence type="ECO:0000305" key="1"/>
<organism>
    <name type="scientific">Gloeobacter violaceus (strain ATCC 29082 / PCC 7421)</name>
    <dbReference type="NCBI Taxonomy" id="251221"/>
    <lineage>
        <taxon>Bacteria</taxon>
        <taxon>Bacillati</taxon>
        <taxon>Cyanobacteriota</taxon>
        <taxon>Cyanophyceae</taxon>
        <taxon>Gloeobacterales</taxon>
        <taxon>Gloeobacteraceae</taxon>
        <taxon>Gloeobacter</taxon>
    </lineage>
</organism>
<keyword id="KW-0456">Lyase</keyword>
<keyword id="KW-1185">Reference proteome</keyword>
<accession>Q7NM43</accession>
<name>PHS1_GLOVI</name>